<accession>A8F992</accession>
<reference key="1">
    <citation type="journal article" date="2007" name="PLoS ONE">
        <title>Paradoxical DNA repair and peroxide resistance gene conservation in Bacillus pumilus SAFR-032.</title>
        <authorList>
            <person name="Gioia J."/>
            <person name="Yerrapragada S."/>
            <person name="Qin X."/>
            <person name="Jiang H."/>
            <person name="Igboeli O.C."/>
            <person name="Muzny D."/>
            <person name="Dugan-Rocha S."/>
            <person name="Ding Y."/>
            <person name="Hawes A."/>
            <person name="Liu W."/>
            <person name="Perez L."/>
            <person name="Kovar C."/>
            <person name="Dinh H."/>
            <person name="Lee S."/>
            <person name="Nazareth L."/>
            <person name="Blyth P."/>
            <person name="Holder M."/>
            <person name="Buhay C."/>
            <person name="Tirumalai M.R."/>
            <person name="Liu Y."/>
            <person name="Dasgupta I."/>
            <person name="Bokhetache L."/>
            <person name="Fujita M."/>
            <person name="Karouia F."/>
            <person name="Eswara Moorthy P."/>
            <person name="Siefert J."/>
            <person name="Uzman A."/>
            <person name="Buzumbo P."/>
            <person name="Verma A."/>
            <person name="Zwiya H."/>
            <person name="McWilliams B.D."/>
            <person name="Olowu A."/>
            <person name="Clinkenbeard K.D."/>
            <person name="Newcombe D."/>
            <person name="Golebiewski L."/>
            <person name="Petrosino J.F."/>
            <person name="Nicholson W.L."/>
            <person name="Fox G.E."/>
            <person name="Venkateswaran K."/>
            <person name="Highlander S.K."/>
            <person name="Weinstock G.M."/>
        </authorList>
    </citation>
    <scope>NUCLEOTIDE SEQUENCE [LARGE SCALE GENOMIC DNA]</scope>
    <source>
        <strain>SAFR-032</strain>
    </source>
</reference>
<sequence>MLLPKRVKYRREHRGKMRGRAKGGTEVHFGEYGIQALEASWITNRQIEAARIAMTRYMKRGGKVWIKIFPSKPYTAKPLEVRMGSGKGAPEGWVAVVKPGKVLFEISGVSEEVAREALRLASHKLPIKTKFVKREEIGGESNES</sequence>
<feature type="chain" id="PRO_1000067675" description="Large ribosomal subunit protein uL16">
    <location>
        <begin position="1"/>
        <end position="144"/>
    </location>
</feature>
<keyword id="KW-0687">Ribonucleoprotein</keyword>
<keyword id="KW-0689">Ribosomal protein</keyword>
<keyword id="KW-0694">RNA-binding</keyword>
<keyword id="KW-0699">rRNA-binding</keyword>
<keyword id="KW-0820">tRNA-binding</keyword>
<dbReference type="EMBL" id="CP000813">
    <property type="protein sequence ID" value="ABV60809.1"/>
    <property type="molecule type" value="Genomic_DNA"/>
</dbReference>
<dbReference type="RefSeq" id="WP_003156478.1">
    <property type="nucleotide sequence ID" value="NZ_VEIS01000020.1"/>
</dbReference>
<dbReference type="SMR" id="A8F992"/>
<dbReference type="STRING" id="315750.BPUM_0109"/>
<dbReference type="GeneID" id="93079287"/>
<dbReference type="KEGG" id="bpu:BPUM_0109"/>
<dbReference type="eggNOG" id="COG0197">
    <property type="taxonomic scope" value="Bacteria"/>
</dbReference>
<dbReference type="HOGENOM" id="CLU_078858_2_1_9"/>
<dbReference type="OrthoDB" id="9802589at2"/>
<dbReference type="Proteomes" id="UP000001355">
    <property type="component" value="Chromosome"/>
</dbReference>
<dbReference type="GO" id="GO:0022625">
    <property type="term" value="C:cytosolic large ribosomal subunit"/>
    <property type="evidence" value="ECO:0007669"/>
    <property type="project" value="TreeGrafter"/>
</dbReference>
<dbReference type="GO" id="GO:0019843">
    <property type="term" value="F:rRNA binding"/>
    <property type="evidence" value="ECO:0007669"/>
    <property type="project" value="UniProtKB-UniRule"/>
</dbReference>
<dbReference type="GO" id="GO:0003735">
    <property type="term" value="F:structural constituent of ribosome"/>
    <property type="evidence" value="ECO:0007669"/>
    <property type="project" value="InterPro"/>
</dbReference>
<dbReference type="GO" id="GO:0000049">
    <property type="term" value="F:tRNA binding"/>
    <property type="evidence" value="ECO:0007669"/>
    <property type="project" value="UniProtKB-KW"/>
</dbReference>
<dbReference type="GO" id="GO:0006412">
    <property type="term" value="P:translation"/>
    <property type="evidence" value="ECO:0007669"/>
    <property type="project" value="UniProtKB-UniRule"/>
</dbReference>
<dbReference type="CDD" id="cd01433">
    <property type="entry name" value="Ribosomal_L16_L10e"/>
    <property type="match status" value="1"/>
</dbReference>
<dbReference type="FunFam" id="3.90.1170.10:FF:000001">
    <property type="entry name" value="50S ribosomal protein L16"/>
    <property type="match status" value="1"/>
</dbReference>
<dbReference type="Gene3D" id="3.90.1170.10">
    <property type="entry name" value="Ribosomal protein L10e/L16"/>
    <property type="match status" value="1"/>
</dbReference>
<dbReference type="HAMAP" id="MF_01342">
    <property type="entry name" value="Ribosomal_uL16"/>
    <property type="match status" value="1"/>
</dbReference>
<dbReference type="InterPro" id="IPR047873">
    <property type="entry name" value="Ribosomal_uL16"/>
</dbReference>
<dbReference type="InterPro" id="IPR000114">
    <property type="entry name" value="Ribosomal_uL16_bact-type"/>
</dbReference>
<dbReference type="InterPro" id="IPR020798">
    <property type="entry name" value="Ribosomal_uL16_CS"/>
</dbReference>
<dbReference type="InterPro" id="IPR016180">
    <property type="entry name" value="Ribosomal_uL16_dom"/>
</dbReference>
<dbReference type="InterPro" id="IPR036920">
    <property type="entry name" value="Ribosomal_uL16_sf"/>
</dbReference>
<dbReference type="NCBIfam" id="TIGR01164">
    <property type="entry name" value="rplP_bact"/>
    <property type="match status" value="1"/>
</dbReference>
<dbReference type="PANTHER" id="PTHR12220">
    <property type="entry name" value="50S/60S RIBOSOMAL PROTEIN L16"/>
    <property type="match status" value="1"/>
</dbReference>
<dbReference type="PANTHER" id="PTHR12220:SF13">
    <property type="entry name" value="LARGE RIBOSOMAL SUBUNIT PROTEIN UL16M"/>
    <property type="match status" value="1"/>
</dbReference>
<dbReference type="Pfam" id="PF00252">
    <property type="entry name" value="Ribosomal_L16"/>
    <property type="match status" value="1"/>
</dbReference>
<dbReference type="PRINTS" id="PR00060">
    <property type="entry name" value="RIBOSOMALL16"/>
</dbReference>
<dbReference type="SUPFAM" id="SSF54686">
    <property type="entry name" value="Ribosomal protein L16p/L10e"/>
    <property type="match status" value="1"/>
</dbReference>
<dbReference type="PROSITE" id="PS00586">
    <property type="entry name" value="RIBOSOMAL_L16_1"/>
    <property type="match status" value="1"/>
</dbReference>
<dbReference type="PROSITE" id="PS00701">
    <property type="entry name" value="RIBOSOMAL_L16_2"/>
    <property type="match status" value="1"/>
</dbReference>
<protein>
    <recommendedName>
        <fullName evidence="1">Large ribosomal subunit protein uL16</fullName>
    </recommendedName>
    <alternativeName>
        <fullName evidence="2">50S ribosomal protein L16</fullName>
    </alternativeName>
</protein>
<proteinExistence type="inferred from homology"/>
<organism>
    <name type="scientific">Bacillus pumilus (strain SAFR-032)</name>
    <dbReference type="NCBI Taxonomy" id="315750"/>
    <lineage>
        <taxon>Bacteria</taxon>
        <taxon>Bacillati</taxon>
        <taxon>Bacillota</taxon>
        <taxon>Bacilli</taxon>
        <taxon>Bacillales</taxon>
        <taxon>Bacillaceae</taxon>
        <taxon>Bacillus</taxon>
    </lineage>
</organism>
<gene>
    <name evidence="1" type="primary">rplP</name>
    <name type="ordered locus">BPUM_0109</name>
</gene>
<evidence type="ECO:0000255" key="1">
    <source>
        <dbReference type="HAMAP-Rule" id="MF_01342"/>
    </source>
</evidence>
<evidence type="ECO:0000305" key="2"/>
<name>RL16_BACP2</name>
<comment type="function">
    <text evidence="1">Binds 23S rRNA and is also seen to make contacts with the A and possibly P site tRNAs.</text>
</comment>
<comment type="subunit">
    <text evidence="1">Part of the 50S ribosomal subunit.</text>
</comment>
<comment type="similarity">
    <text evidence="1">Belongs to the universal ribosomal protein uL16 family.</text>
</comment>